<proteinExistence type="inferred from homology"/>
<comment type="function">
    <text evidence="1">NDH-1 shuttles electrons from NADH, via FMN and iron-sulfur (Fe-S) centers, to quinones in the respiratory chain. The immediate electron acceptor for the enzyme in this species is believed to be ubiquinone. Couples the redox reaction to proton translocation (for every two electrons transferred, four hydrogen ions are translocated across the cytoplasmic membrane), and thus conserves the redox energy in a proton gradient.</text>
</comment>
<comment type="catalytic activity">
    <reaction evidence="1">
        <text>a quinone + NADH + 5 H(+)(in) = a quinol + NAD(+) + 4 H(+)(out)</text>
        <dbReference type="Rhea" id="RHEA:57888"/>
        <dbReference type="ChEBI" id="CHEBI:15378"/>
        <dbReference type="ChEBI" id="CHEBI:24646"/>
        <dbReference type="ChEBI" id="CHEBI:57540"/>
        <dbReference type="ChEBI" id="CHEBI:57945"/>
        <dbReference type="ChEBI" id="CHEBI:132124"/>
    </reaction>
</comment>
<comment type="subunit">
    <text evidence="1">NDH-1 is composed of 14 different subunits. Subunits NuoA, H, J, K, L, M, N constitute the membrane sector of the complex.</text>
</comment>
<comment type="subcellular location">
    <subcellularLocation>
        <location evidence="1">Cell inner membrane</location>
        <topology evidence="1">Multi-pass membrane protein</topology>
    </subcellularLocation>
</comment>
<comment type="similarity">
    <text evidence="1">Belongs to the complex I subunit 4L family.</text>
</comment>
<protein>
    <recommendedName>
        <fullName evidence="1">NADH-quinone oxidoreductase subunit K</fullName>
        <ecNumber evidence="1">7.1.1.-</ecNumber>
    </recommendedName>
    <alternativeName>
        <fullName evidence="1">NADH dehydrogenase I subunit K</fullName>
    </alternativeName>
    <alternativeName>
        <fullName evidence="1">NDH-1 subunit K</fullName>
    </alternativeName>
</protein>
<keyword id="KW-0997">Cell inner membrane</keyword>
<keyword id="KW-1003">Cell membrane</keyword>
<keyword id="KW-0472">Membrane</keyword>
<keyword id="KW-0520">NAD</keyword>
<keyword id="KW-0874">Quinone</keyword>
<keyword id="KW-1185">Reference proteome</keyword>
<keyword id="KW-1278">Translocase</keyword>
<keyword id="KW-0812">Transmembrane</keyword>
<keyword id="KW-1133">Transmembrane helix</keyword>
<keyword id="KW-0813">Transport</keyword>
<keyword id="KW-0830">Ubiquinone</keyword>
<feature type="chain" id="PRO_0000390183" description="NADH-quinone oxidoreductase subunit K">
    <location>
        <begin position="1"/>
        <end position="101"/>
    </location>
</feature>
<feature type="transmembrane region" description="Helical" evidence="1">
    <location>
        <begin position="4"/>
        <end position="24"/>
    </location>
</feature>
<feature type="transmembrane region" description="Helical" evidence="1">
    <location>
        <begin position="30"/>
        <end position="50"/>
    </location>
</feature>
<feature type="transmembrane region" description="Helical" evidence="1">
    <location>
        <begin position="61"/>
        <end position="81"/>
    </location>
</feature>
<evidence type="ECO:0000255" key="1">
    <source>
        <dbReference type="HAMAP-Rule" id="MF_01456"/>
    </source>
</evidence>
<accession>Q1LPV3</accession>
<dbReference type="EC" id="7.1.1.-" evidence="1"/>
<dbReference type="EMBL" id="CP000352">
    <property type="protein sequence ID" value="ABF07823.1"/>
    <property type="molecule type" value="Genomic_DNA"/>
</dbReference>
<dbReference type="RefSeq" id="WP_008643358.1">
    <property type="nucleotide sequence ID" value="NC_007973.1"/>
</dbReference>
<dbReference type="SMR" id="Q1LPV3"/>
<dbReference type="STRING" id="266264.Rmet_0937"/>
<dbReference type="GeneID" id="60825424"/>
<dbReference type="KEGG" id="rme:Rmet_0937"/>
<dbReference type="eggNOG" id="COG0713">
    <property type="taxonomic scope" value="Bacteria"/>
</dbReference>
<dbReference type="HOGENOM" id="CLU_144724_2_0_4"/>
<dbReference type="Proteomes" id="UP000002429">
    <property type="component" value="Chromosome"/>
</dbReference>
<dbReference type="GO" id="GO:0030964">
    <property type="term" value="C:NADH dehydrogenase complex"/>
    <property type="evidence" value="ECO:0007669"/>
    <property type="project" value="TreeGrafter"/>
</dbReference>
<dbReference type="GO" id="GO:0005886">
    <property type="term" value="C:plasma membrane"/>
    <property type="evidence" value="ECO:0007669"/>
    <property type="project" value="UniProtKB-SubCell"/>
</dbReference>
<dbReference type="GO" id="GO:0050136">
    <property type="term" value="F:NADH:ubiquinone reductase (non-electrogenic) activity"/>
    <property type="evidence" value="ECO:0007669"/>
    <property type="project" value="UniProtKB-UniRule"/>
</dbReference>
<dbReference type="GO" id="GO:0048038">
    <property type="term" value="F:quinone binding"/>
    <property type="evidence" value="ECO:0007669"/>
    <property type="project" value="UniProtKB-KW"/>
</dbReference>
<dbReference type="GO" id="GO:0042773">
    <property type="term" value="P:ATP synthesis coupled electron transport"/>
    <property type="evidence" value="ECO:0007669"/>
    <property type="project" value="InterPro"/>
</dbReference>
<dbReference type="FunFam" id="1.10.287.3510:FF:000001">
    <property type="entry name" value="NADH-quinone oxidoreductase subunit K"/>
    <property type="match status" value="1"/>
</dbReference>
<dbReference type="Gene3D" id="1.10.287.3510">
    <property type="match status" value="1"/>
</dbReference>
<dbReference type="HAMAP" id="MF_01456">
    <property type="entry name" value="NDH1_NuoK"/>
    <property type="match status" value="1"/>
</dbReference>
<dbReference type="InterPro" id="IPR001133">
    <property type="entry name" value="NADH_UbQ_OxRdtase_chain4L/K"/>
</dbReference>
<dbReference type="InterPro" id="IPR039428">
    <property type="entry name" value="NUOK/Mnh_C1-like"/>
</dbReference>
<dbReference type="NCBIfam" id="NF004320">
    <property type="entry name" value="PRK05715.1-2"/>
    <property type="match status" value="1"/>
</dbReference>
<dbReference type="NCBIfam" id="NF004321">
    <property type="entry name" value="PRK05715.1-3"/>
    <property type="match status" value="1"/>
</dbReference>
<dbReference type="NCBIfam" id="NF004323">
    <property type="entry name" value="PRK05715.1-5"/>
    <property type="match status" value="1"/>
</dbReference>
<dbReference type="PANTHER" id="PTHR11434:SF21">
    <property type="entry name" value="NADH DEHYDROGENASE SUBUNIT 4L-RELATED"/>
    <property type="match status" value="1"/>
</dbReference>
<dbReference type="PANTHER" id="PTHR11434">
    <property type="entry name" value="NADH-UBIQUINONE OXIDOREDUCTASE SUBUNIT ND4L"/>
    <property type="match status" value="1"/>
</dbReference>
<dbReference type="Pfam" id="PF00420">
    <property type="entry name" value="Oxidored_q2"/>
    <property type="match status" value="1"/>
</dbReference>
<sequence>MLSLAHFLVLGAILFAISIVGIFLNRKNVIVLLMALELLLLAVNMNFVAFSHYMGDLAGQVFVFFILTVAAAESAIGLAILVVLFRNLDTINVDDMDTLKG</sequence>
<name>NUOK_CUPMC</name>
<reference key="1">
    <citation type="journal article" date="2010" name="PLoS ONE">
        <title>The complete genome sequence of Cupriavidus metallidurans strain CH34, a master survivalist in harsh and anthropogenic environments.</title>
        <authorList>
            <person name="Janssen P.J."/>
            <person name="Van Houdt R."/>
            <person name="Moors H."/>
            <person name="Monsieurs P."/>
            <person name="Morin N."/>
            <person name="Michaux A."/>
            <person name="Benotmane M.A."/>
            <person name="Leys N."/>
            <person name="Vallaeys T."/>
            <person name="Lapidus A."/>
            <person name="Monchy S."/>
            <person name="Medigue C."/>
            <person name="Taghavi S."/>
            <person name="McCorkle S."/>
            <person name="Dunn J."/>
            <person name="van der Lelie D."/>
            <person name="Mergeay M."/>
        </authorList>
    </citation>
    <scope>NUCLEOTIDE SEQUENCE [LARGE SCALE GENOMIC DNA]</scope>
    <source>
        <strain>ATCC 43123 / DSM 2839 / NBRC 102507 / CH34</strain>
    </source>
</reference>
<gene>
    <name evidence="1" type="primary">nuoK</name>
    <name type="ordered locus">Rmet_0937</name>
</gene>
<organism>
    <name type="scientific">Cupriavidus metallidurans (strain ATCC 43123 / DSM 2839 / NBRC 102507 / CH34)</name>
    <name type="common">Ralstonia metallidurans</name>
    <dbReference type="NCBI Taxonomy" id="266264"/>
    <lineage>
        <taxon>Bacteria</taxon>
        <taxon>Pseudomonadati</taxon>
        <taxon>Pseudomonadota</taxon>
        <taxon>Betaproteobacteria</taxon>
        <taxon>Burkholderiales</taxon>
        <taxon>Burkholderiaceae</taxon>
        <taxon>Cupriavidus</taxon>
    </lineage>
</organism>